<sequence length="233" mass="24601">MAKLTKRMRVIREKVDGTKLYEINDAVALLKELATAKFVESVDVAVNLGIDPRKSDQNVRGATVLPHGTGRDVRVAVFTQGANAEAAKAAGAELVGMDDLAEQIKAGEMNFDVVIASPDAMRVVGMLGQILGPRGLMPNPKTGTVTPNVAEAVKNAKAGQVRYRNDKNGIIHTTIGKVDFTPVQLKENLEALISALKKAKPAVAKGVYVKKVSISTTMGAGVAVDQATLDTAN</sequence>
<evidence type="ECO:0000255" key="1">
    <source>
        <dbReference type="HAMAP-Rule" id="MF_01318"/>
    </source>
</evidence>
<evidence type="ECO:0000305" key="2"/>
<name>RL1_SHESW</name>
<comment type="function">
    <text evidence="1">Binds directly to 23S rRNA. The L1 stalk is quite mobile in the ribosome, and is involved in E site tRNA release.</text>
</comment>
<comment type="function">
    <text evidence="1">Protein L1 is also a translational repressor protein, it controls the translation of the L11 operon by binding to its mRNA.</text>
</comment>
<comment type="subunit">
    <text evidence="1">Part of the 50S ribosomal subunit.</text>
</comment>
<comment type="similarity">
    <text evidence="1">Belongs to the universal ribosomal protein uL1 family.</text>
</comment>
<gene>
    <name evidence="1" type="primary">rplA</name>
    <name type="ordered locus">Sputw3181_0146</name>
</gene>
<accession>A1REA4</accession>
<organism>
    <name type="scientific">Shewanella sp. (strain W3-18-1)</name>
    <dbReference type="NCBI Taxonomy" id="351745"/>
    <lineage>
        <taxon>Bacteria</taxon>
        <taxon>Pseudomonadati</taxon>
        <taxon>Pseudomonadota</taxon>
        <taxon>Gammaproteobacteria</taxon>
        <taxon>Alteromonadales</taxon>
        <taxon>Shewanellaceae</taxon>
        <taxon>Shewanella</taxon>
    </lineage>
</organism>
<feature type="chain" id="PRO_0000308105" description="Large ribosomal subunit protein uL1">
    <location>
        <begin position="1"/>
        <end position="233"/>
    </location>
</feature>
<dbReference type="EMBL" id="CP000503">
    <property type="protein sequence ID" value="ABM22999.1"/>
    <property type="molecule type" value="Genomic_DNA"/>
</dbReference>
<dbReference type="RefSeq" id="WP_011787566.1">
    <property type="nucleotide sequence ID" value="NC_008750.1"/>
</dbReference>
<dbReference type="SMR" id="A1REA4"/>
<dbReference type="GeneID" id="67441750"/>
<dbReference type="KEGG" id="shw:Sputw3181_0146"/>
<dbReference type="HOGENOM" id="CLU_062853_0_0_6"/>
<dbReference type="Proteomes" id="UP000002597">
    <property type="component" value="Chromosome"/>
</dbReference>
<dbReference type="GO" id="GO:0022625">
    <property type="term" value="C:cytosolic large ribosomal subunit"/>
    <property type="evidence" value="ECO:0007669"/>
    <property type="project" value="TreeGrafter"/>
</dbReference>
<dbReference type="GO" id="GO:0019843">
    <property type="term" value="F:rRNA binding"/>
    <property type="evidence" value="ECO:0007669"/>
    <property type="project" value="UniProtKB-UniRule"/>
</dbReference>
<dbReference type="GO" id="GO:0003735">
    <property type="term" value="F:structural constituent of ribosome"/>
    <property type="evidence" value="ECO:0007669"/>
    <property type="project" value="InterPro"/>
</dbReference>
<dbReference type="GO" id="GO:0000049">
    <property type="term" value="F:tRNA binding"/>
    <property type="evidence" value="ECO:0007669"/>
    <property type="project" value="UniProtKB-KW"/>
</dbReference>
<dbReference type="GO" id="GO:0006417">
    <property type="term" value="P:regulation of translation"/>
    <property type="evidence" value="ECO:0007669"/>
    <property type="project" value="UniProtKB-KW"/>
</dbReference>
<dbReference type="GO" id="GO:0006412">
    <property type="term" value="P:translation"/>
    <property type="evidence" value="ECO:0007669"/>
    <property type="project" value="UniProtKB-UniRule"/>
</dbReference>
<dbReference type="CDD" id="cd00403">
    <property type="entry name" value="Ribosomal_L1"/>
    <property type="match status" value="1"/>
</dbReference>
<dbReference type="FunFam" id="3.40.50.790:FF:000001">
    <property type="entry name" value="50S ribosomal protein L1"/>
    <property type="match status" value="1"/>
</dbReference>
<dbReference type="Gene3D" id="3.30.190.20">
    <property type="match status" value="1"/>
</dbReference>
<dbReference type="Gene3D" id="3.40.50.790">
    <property type="match status" value="1"/>
</dbReference>
<dbReference type="HAMAP" id="MF_01318_B">
    <property type="entry name" value="Ribosomal_uL1_B"/>
    <property type="match status" value="1"/>
</dbReference>
<dbReference type="InterPro" id="IPR005878">
    <property type="entry name" value="Ribosom_uL1_bac-type"/>
</dbReference>
<dbReference type="InterPro" id="IPR002143">
    <property type="entry name" value="Ribosomal_uL1"/>
</dbReference>
<dbReference type="InterPro" id="IPR023674">
    <property type="entry name" value="Ribosomal_uL1-like"/>
</dbReference>
<dbReference type="InterPro" id="IPR028364">
    <property type="entry name" value="Ribosomal_uL1/biogenesis"/>
</dbReference>
<dbReference type="InterPro" id="IPR016095">
    <property type="entry name" value="Ribosomal_uL1_3-a/b-sand"/>
</dbReference>
<dbReference type="InterPro" id="IPR023673">
    <property type="entry name" value="Ribosomal_uL1_CS"/>
</dbReference>
<dbReference type="NCBIfam" id="TIGR01169">
    <property type="entry name" value="rplA_bact"/>
    <property type="match status" value="1"/>
</dbReference>
<dbReference type="PANTHER" id="PTHR36427">
    <property type="entry name" value="54S RIBOSOMAL PROTEIN L1, MITOCHONDRIAL"/>
    <property type="match status" value="1"/>
</dbReference>
<dbReference type="PANTHER" id="PTHR36427:SF3">
    <property type="entry name" value="LARGE RIBOSOMAL SUBUNIT PROTEIN UL1M"/>
    <property type="match status" value="1"/>
</dbReference>
<dbReference type="Pfam" id="PF00687">
    <property type="entry name" value="Ribosomal_L1"/>
    <property type="match status" value="1"/>
</dbReference>
<dbReference type="PIRSF" id="PIRSF002155">
    <property type="entry name" value="Ribosomal_L1"/>
    <property type="match status" value="1"/>
</dbReference>
<dbReference type="SUPFAM" id="SSF56808">
    <property type="entry name" value="Ribosomal protein L1"/>
    <property type="match status" value="1"/>
</dbReference>
<dbReference type="PROSITE" id="PS01199">
    <property type="entry name" value="RIBOSOMAL_L1"/>
    <property type="match status" value="1"/>
</dbReference>
<keyword id="KW-0678">Repressor</keyword>
<keyword id="KW-0687">Ribonucleoprotein</keyword>
<keyword id="KW-0689">Ribosomal protein</keyword>
<keyword id="KW-0694">RNA-binding</keyword>
<keyword id="KW-0699">rRNA-binding</keyword>
<keyword id="KW-0810">Translation regulation</keyword>
<keyword id="KW-0820">tRNA-binding</keyword>
<proteinExistence type="inferred from homology"/>
<protein>
    <recommendedName>
        <fullName evidence="1">Large ribosomal subunit protein uL1</fullName>
    </recommendedName>
    <alternativeName>
        <fullName evidence="2">50S ribosomal protein L1</fullName>
    </alternativeName>
</protein>
<reference key="1">
    <citation type="submission" date="2006-12" db="EMBL/GenBank/DDBJ databases">
        <title>Complete sequence of Shewanella sp. W3-18-1.</title>
        <authorList>
            <consortium name="US DOE Joint Genome Institute"/>
            <person name="Copeland A."/>
            <person name="Lucas S."/>
            <person name="Lapidus A."/>
            <person name="Barry K."/>
            <person name="Detter J.C."/>
            <person name="Glavina del Rio T."/>
            <person name="Hammon N."/>
            <person name="Israni S."/>
            <person name="Dalin E."/>
            <person name="Tice H."/>
            <person name="Pitluck S."/>
            <person name="Chain P."/>
            <person name="Malfatti S."/>
            <person name="Shin M."/>
            <person name="Vergez L."/>
            <person name="Schmutz J."/>
            <person name="Larimer F."/>
            <person name="Land M."/>
            <person name="Hauser L."/>
            <person name="Kyrpides N."/>
            <person name="Lykidis A."/>
            <person name="Tiedje J."/>
            <person name="Richardson P."/>
        </authorList>
    </citation>
    <scope>NUCLEOTIDE SEQUENCE [LARGE SCALE GENOMIC DNA]</scope>
    <source>
        <strain>W3-18-1</strain>
    </source>
</reference>